<protein>
    <recommendedName>
        <fullName evidence="1">Integration host factor subunit beta</fullName>
        <shortName evidence="1">IHF-beta</shortName>
    </recommendedName>
</protein>
<accession>A5W7F5</accession>
<reference key="1">
    <citation type="submission" date="2007-05" db="EMBL/GenBank/DDBJ databases">
        <title>Complete sequence of Pseudomonas putida F1.</title>
        <authorList>
            <consortium name="US DOE Joint Genome Institute"/>
            <person name="Copeland A."/>
            <person name="Lucas S."/>
            <person name="Lapidus A."/>
            <person name="Barry K."/>
            <person name="Detter J.C."/>
            <person name="Glavina del Rio T."/>
            <person name="Hammon N."/>
            <person name="Israni S."/>
            <person name="Dalin E."/>
            <person name="Tice H."/>
            <person name="Pitluck S."/>
            <person name="Chain P."/>
            <person name="Malfatti S."/>
            <person name="Shin M."/>
            <person name="Vergez L."/>
            <person name="Schmutz J."/>
            <person name="Larimer F."/>
            <person name="Land M."/>
            <person name="Hauser L."/>
            <person name="Kyrpides N."/>
            <person name="Lykidis A."/>
            <person name="Parales R."/>
            <person name="Richardson P."/>
        </authorList>
    </citation>
    <scope>NUCLEOTIDE SEQUENCE [LARGE SCALE GENOMIC DNA]</scope>
    <source>
        <strain>ATCC 700007 / DSM 6899 / JCM 31910 / BCRC 17059 / LMG 24140 / F1</strain>
    </source>
</reference>
<name>IHFB_PSEP1</name>
<proteinExistence type="inferred from homology"/>
<organism>
    <name type="scientific">Pseudomonas putida (strain ATCC 700007 / DSM 6899 / JCM 31910 / BCRC 17059 / LMG 24140 / F1)</name>
    <dbReference type="NCBI Taxonomy" id="351746"/>
    <lineage>
        <taxon>Bacteria</taxon>
        <taxon>Pseudomonadati</taxon>
        <taxon>Pseudomonadota</taxon>
        <taxon>Gammaproteobacteria</taxon>
        <taxon>Pseudomonadales</taxon>
        <taxon>Pseudomonadaceae</taxon>
        <taxon>Pseudomonas</taxon>
    </lineage>
</organism>
<evidence type="ECO:0000255" key="1">
    <source>
        <dbReference type="HAMAP-Rule" id="MF_00381"/>
    </source>
</evidence>
<gene>
    <name evidence="1" type="primary">ihfB</name>
    <name evidence="1" type="synonym">himD</name>
    <name type="ordered locus">Pput_3941</name>
</gene>
<feature type="chain" id="PRO_1000060635" description="Integration host factor subunit beta">
    <location>
        <begin position="1"/>
        <end position="98"/>
    </location>
</feature>
<keyword id="KW-0233">DNA recombination</keyword>
<keyword id="KW-0238">DNA-binding</keyword>
<keyword id="KW-0804">Transcription</keyword>
<keyword id="KW-0805">Transcription regulation</keyword>
<keyword id="KW-0810">Translation regulation</keyword>
<dbReference type="EMBL" id="CP000712">
    <property type="protein sequence ID" value="ABQ80065.1"/>
    <property type="molecule type" value="Genomic_DNA"/>
</dbReference>
<dbReference type="SMR" id="A5W7F5"/>
<dbReference type="KEGG" id="ppf:Pput_3941"/>
<dbReference type="eggNOG" id="COG0776">
    <property type="taxonomic scope" value="Bacteria"/>
</dbReference>
<dbReference type="HOGENOM" id="CLU_105066_2_0_6"/>
<dbReference type="GO" id="GO:0005694">
    <property type="term" value="C:chromosome"/>
    <property type="evidence" value="ECO:0007669"/>
    <property type="project" value="InterPro"/>
</dbReference>
<dbReference type="GO" id="GO:0005829">
    <property type="term" value="C:cytosol"/>
    <property type="evidence" value="ECO:0007669"/>
    <property type="project" value="TreeGrafter"/>
</dbReference>
<dbReference type="GO" id="GO:0003677">
    <property type="term" value="F:DNA binding"/>
    <property type="evidence" value="ECO:0007669"/>
    <property type="project" value="UniProtKB-UniRule"/>
</dbReference>
<dbReference type="GO" id="GO:0030527">
    <property type="term" value="F:structural constituent of chromatin"/>
    <property type="evidence" value="ECO:0007669"/>
    <property type="project" value="InterPro"/>
</dbReference>
<dbReference type="GO" id="GO:0006310">
    <property type="term" value="P:DNA recombination"/>
    <property type="evidence" value="ECO:0007669"/>
    <property type="project" value="UniProtKB-UniRule"/>
</dbReference>
<dbReference type="GO" id="GO:0006355">
    <property type="term" value="P:regulation of DNA-templated transcription"/>
    <property type="evidence" value="ECO:0007669"/>
    <property type="project" value="UniProtKB-UniRule"/>
</dbReference>
<dbReference type="GO" id="GO:0006417">
    <property type="term" value="P:regulation of translation"/>
    <property type="evidence" value="ECO:0007669"/>
    <property type="project" value="UniProtKB-UniRule"/>
</dbReference>
<dbReference type="CDD" id="cd13836">
    <property type="entry name" value="IHF_B"/>
    <property type="match status" value="1"/>
</dbReference>
<dbReference type="FunFam" id="4.10.520.10:FF:000003">
    <property type="entry name" value="Integration host factor subunit beta"/>
    <property type="match status" value="1"/>
</dbReference>
<dbReference type="Gene3D" id="4.10.520.10">
    <property type="entry name" value="IHF-like DNA-binding proteins"/>
    <property type="match status" value="1"/>
</dbReference>
<dbReference type="HAMAP" id="MF_00381">
    <property type="entry name" value="IHF_beta"/>
    <property type="match status" value="1"/>
</dbReference>
<dbReference type="InterPro" id="IPR000119">
    <property type="entry name" value="Hist_DNA-bd"/>
</dbReference>
<dbReference type="InterPro" id="IPR020816">
    <property type="entry name" value="Histone-like_DNA-bd_CS"/>
</dbReference>
<dbReference type="InterPro" id="IPR010992">
    <property type="entry name" value="IHF-like_DNA-bd_dom_sf"/>
</dbReference>
<dbReference type="InterPro" id="IPR005685">
    <property type="entry name" value="IHF_beta"/>
</dbReference>
<dbReference type="NCBIfam" id="TIGR00988">
    <property type="entry name" value="hip"/>
    <property type="match status" value="1"/>
</dbReference>
<dbReference type="NCBIfam" id="NF001222">
    <property type="entry name" value="PRK00199.1"/>
    <property type="match status" value="1"/>
</dbReference>
<dbReference type="PANTHER" id="PTHR33175">
    <property type="entry name" value="DNA-BINDING PROTEIN HU"/>
    <property type="match status" value="1"/>
</dbReference>
<dbReference type="PANTHER" id="PTHR33175:SF5">
    <property type="entry name" value="INTEGRATION HOST FACTOR SUBUNIT BETA"/>
    <property type="match status" value="1"/>
</dbReference>
<dbReference type="Pfam" id="PF00216">
    <property type="entry name" value="Bac_DNA_binding"/>
    <property type="match status" value="1"/>
</dbReference>
<dbReference type="PRINTS" id="PR01727">
    <property type="entry name" value="DNABINDINGHU"/>
</dbReference>
<dbReference type="SMART" id="SM00411">
    <property type="entry name" value="BHL"/>
    <property type="match status" value="1"/>
</dbReference>
<dbReference type="SUPFAM" id="SSF47729">
    <property type="entry name" value="IHF-like DNA-binding proteins"/>
    <property type="match status" value="1"/>
</dbReference>
<dbReference type="PROSITE" id="PS00045">
    <property type="entry name" value="HISTONE_LIKE"/>
    <property type="match status" value="1"/>
</dbReference>
<sequence length="98" mass="11028">MTKSELIERIVTHQGLLSSKDVELAIKTMLEQMSQCLATGDRIEIRGFGSFSLHYRAPRVGRNPKTGQSVSLEGKFVPHFKPGKELRDRVNEEDEAEA</sequence>
<comment type="function">
    <text evidence="1">This protein is one of the two subunits of integration host factor, a specific DNA-binding protein that functions in genetic recombination as well as in transcriptional and translational control.</text>
</comment>
<comment type="subunit">
    <text evidence="1">Heterodimer of an alpha and a beta chain.</text>
</comment>
<comment type="similarity">
    <text evidence="1">Belongs to the bacterial histone-like protein family.</text>
</comment>